<evidence type="ECO:0000250" key="1"/>
<evidence type="ECO:0000269" key="2">
    <source>
    </source>
</evidence>
<evidence type="ECO:0000269" key="3">
    <source>
    </source>
</evidence>
<evidence type="ECO:0000303" key="4">
    <source ref="1"/>
</evidence>
<evidence type="ECO:0000305" key="5"/>
<accession>Q32PC9</accession>
<accession>A4IFR7</accession>
<sequence>MDALEEESFALSFSSASDAEFDAVVGYLEDIIMDDEFQLLQRNFMDKYYQEFEDTEENKLTYTPIFNEYISLVEKYIEEQLLERIPGFNMAAFTTTLQHHKDEVAGDIFDMLLTFTDFLAFKEMFLDYRAEKEGRGLDLSSGLVVTSLCKSSSVPASQNNLRP</sequence>
<organism>
    <name type="scientific">Bos taurus</name>
    <name type="common">Bovine</name>
    <dbReference type="NCBI Taxonomy" id="9913"/>
    <lineage>
        <taxon>Eukaryota</taxon>
        <taxon>Metazoa</taxon>
        <taxon>Chordata</taxon>
        <taxon>Craniata</taxon>
        <taxon>Vertebrata</taxon>
        <taxon>Euteleostomi</taxon>
        <taxon>Mammalia</taxon>
        <taxon>Eutheria</taxon>
        <taxon>Laurasiatheria</taxon>
        <taxon>Artiodactyla</taxon>
        <taxon>Ruminantia</taxon>
        <taxon>Pecora</taxon>
        <taxon>Bovidae</taxon>
        <taxon>Bovinae</taxon>
        <taxon>Bos</taxon>
    </lineage>
</organism>
<proteinExistence type="evidence at protein level"/>
<keyword id="KW-0025">Alternative splicing</keyword>
<keyword id="KW-0966">Cell projection</keyword>
<keyword id="KW-0969">Cilium</keyword>
<keyword id="KW-0963">Cytoplasm</keyword>
<keyword id="KW-0206">Cytoskeleton</keyword>
<keyword id="KW-0496">Mitochondrion</keyword>
<keyword id="KW-0539">Nucleus</keyword>
<keyword id="KW-1185">Reference proteome</keyword>
<comment type="function">
    <text evidence="1">Together with ARL2, plays a role in the nuclear translocation, retention and transcriptional activity of STAT3. May play a role as an effector of ARL2 (By similarity).</text>
</comment>
<comment type="subunit">
    <text evidence="1 2 3">Interacts with GTP bound ARL2 and ARL3; the complex ARL2-ARL2BP as well as ARL2BP alone, binds to SLC25A4/ANT1. Interaction with ARL2 may be required for targeting to cilia basal body (By similarity). Interacts with STAT3; interaction is enhanced with ARL2. Found in a complex with ARL2, ARL2BP and SLC25A4. Interacts with STAT2, STAT3 and STAT4. Found in a complex with ARL2BP, ARL2 and SLC25A6.</text>
</comment>
<comment type="subcellular location">
    <subcellularLocation>
        <location evidence="1">Cytoplasm</location>
    </subcellularLocation>
    <subcellularLocation>
        <location evidence="1">Mitochondrion intermembrane space</location>
    </subcellularLocation>
    <subcellularLocation>
        <location evidence="1">Cytoplasm</location>
        <location evidence="1">Cytoskeleton</location>
        <location evidence="1">Microtubule organizing center</location>
        <location evidence="1">Centrosome</location>
    </subcellularLocation>
    <subcellularLocation>
        <location evidence="1">Nucleus</location>
    </subcellularLocation>
    <subcellularLocation>
        <location evidence="1">Cytoplasm</location>
        <location evidence="1">Cytoskeleton</location>
        <location evidence="1">Spindle</location>
    </subcellularLocation>
    <subcellularLocation>
        <location evidence="1">Cytoplasm</location>
        <location evidence="1">Cytoskeleton</location>
        <location evidence="1">Cilium basal body</location>
    </subcellularLocation>
    <text evidence="1">Detected in the midbody matrix. Not detected in the Golgi, nucleus and on the mitotic spindle. Centrosome-associated throughout the cell cycle. Not detected to interphase microtubules (By similarity). In retina photoreceptor cells, localized in the distal connecting cilia, basal body, ciliary-associated centriole, and ciliary rootlet. Interaction with ARL2 may be required for cilia basal body localization (By similarity). The complex formed with ARL2BP, ARL2 and SLC25A4 is expressed in mitochondria.</text>
</comment>
<comment type="alternative products">
    <event type="alternative splicing"/>
    <isoform>
        <id>Q32PC9-1</id>
        <name>1</name>
        <sequence type="displayed"/>
    </isoform>
    <isoform>
        <id>Q32PC9-2</id>
        <name>2</name>
        <sequence type="described" ref="VSP_025316"/>
    </isoform>
</comment>
<comment type="tissue specificity">
    <text evidence="2 3">Expressed in brain.</text>
</comment>
<comment type="similarity">
    <text evidence="5">Belongs to the ARL2BP family.</text>
</comment>
<reference key="1">
    <citation type="submission" date="2007-03" db="EMBL/GenBank/DDBJ databases">
        <authorList>
            <consortium name="NIH - Mammalian Gene Collection (MGC) project"/>
        </authorList>
    </citation>
    <scope>NUCLEOTIDE SEQUENCE [LARGE SCALE MRNA] (ISOFORMS 1 AND 2)</scope>
    <source>
        <strain>Crossbred X Angus</strain>
        <strain>Hereford</strain>
        <tissue>Fetal pons</tissue>
        <tissue>Liver</tissue>
    </source>
</reference>
<reference key="2">
    <citation type="journal article" date="1999" name="J. Biol. Chem.">
        <title>The ARF-like 2 (ARL2)-binding protein, BART. Purification, cloning, and initial characterization.</title>
        <authorList>
            <person name="Sharer J.D."/>
            <person name="Kahn R.A."/>
        </authorList>
    </citation>
    <scope>IDENTIFICATION BY MASS SPECTROMETRY</scope>
    <scope>INTERACTION WITH ARL2</scope>
    <scope>TISSUE SPECIFICITY</scope>
</reference>
<reference key="3">
    <citation type="journal article" date="2002" name="Mol. Biol. Cell">
        <title>ARL2 and BART enter mitochondria and bind the adenine nucleotide transporter.</title>
        <authorList>
            <person name="Sharer J.D."/>
            <person name="Shern J.F."/>
            <person name="Van Valkenburgh H."/>
            <person name="Wallace D.C."/>
            <person name="Kahn R.A."/>
        </authorList>
    </citation>
    <scope>IDENTIFICATION IN A COMPLEX WITH ARL2 AND SLC25A6</scope>
    <scope>TISSUE SPECIFICITY</scope>
</reference>
<feature type="chain" id="PRO_0000287112" description="ADP-ribosylation factor-like protein 2-binding protein">
    <location>
        <begin position="1"/>
        <end position="163"/>
    </location>
</feature>
<feature type="splice variant" id="VSP_025316" description="In isoform 2." evidence="4">
    <original>MDALEEESFALSF</original>
    <variation>MR</variation>
    <location>
        <begin position="1"/>
        <end position="13"/>
    </location>
</feature>
<name>AR2BP_BOVIN</name>
<gene>
    <name type="primary">ARL2BP</name>
    <name type="synonym">BART1</name>
</gene>
<dbReference type="EMBL" id="BC108166">
    <property type="protein sequence ID" value="AAI08167.1"/>
    <property type="molecule type" value="mRNA"/>
</dbReference>
<dbReference type="EMBL" id="BC134728">
    <property type="protein sequence ID" value="AAI34729.1"/>
    <property type="molecule type" value="mRNA"/>
</dbReference>
<dbReference type="RefSeq" id="NP_001069742.2">
    <molecule id="Q32PC9-1"/>
    <property type="nucleotide sequence ID" value="NM_001076274.2"/>
</dbReference>
<dbReference type="SMR" id="Q32PC9"/>
<dbReference type="BioGRID" id="541183">
    <property type="interactions" value="1"/>
</dbReference>
<dbReference type="FunCoup" id="Q32PC9">
    <property type="interactions" value="2778"/>
</dbReference>
<dbReference type="STRING" id="9913.ENSBTAP00000006363"/>
<dbReference type="PaxDb" id="9913-ENSBTAP00000006363"/>
<dbReference type="Ensembl" id="ENSBTAT00000006363.6">
    <molecule id="Q32PC9-1"/>
    <property type="protein sequence ID" value="ENSBTAP00000006363.4"/>
    <property type="gene ID" value="ENSBTAG00000004844.6"/>
</dbReference>
<dbReference type="Ensembl" id="ENSBTAT00000093512.1">
    <molecule id="Q32PC9-2"/>
    <property type="protein sequence ID" value="ENSBTAP00000082220.1"/>
    <property type="gene ID" value="ENSBTAG00000004844.6"/>
</dbReference>
<dbReference type="GeneID" id="613462"/>
<dbReference type="KEGG" id="bta:613462"/>
<dbReference type="CTD" id="23568"/>
<dbReference type="VEuPathDB" id="HostDB:ENSBTAG00000004844"/>
<dbReference type="eggNOG" id="ENOG502RYJD">
    <property type="taxonomic scope" value="Eukaryota"/>
</dbReference>
<dbReference type="GeneTree" id="ENSGT00390000015052"/>
<dbReference type="HOGENOM" id="CLU_116781_0_0_1"/>
<dbReference type="InParanoid" id="Q32PC9"/>
<dbReference type="OMA" id="CILEIIM"/>
<dbReference type="OrthoDB" id="302784at2759"/>
<dbReference type="TreeFam" id="TF315143"/>
<dbReference type="Reactome" id="R-BTA-83936">
    <property type="pathway name" value="Transport of nucleosides and free purine and pyrimidine bases across the plasma membrane"/>
</dbReference>
<dbReference type="Proteomes" id="UP000009136">
    <property type="component" value="Chromosome 18"/>
</dbReference>
<dbReference type="Bgee" id="ENSBTAG00000004844">
    <property type="expression patterns" value="Expressed in spermatid and 106 other cell types or tissues"/>
</dbReference>
<dbReference type="GO" id="GO:0005813">
    <property type="term" value="C:centrosome"/>
    <property type="evidence" value="ECO:0007669"/>
    <property type="project" value="UniProtKB-SubCell"/>
</dbReference>
<dbReference type="GO" id="GO:0036064">
    <property type="term" value="C:ciliary basal body"/>
    <property type="evidence" value="ECO:0007669"/>
    <property type="project" value="Ensembl"/>
</dbReference>
<dbReference type="GO" id="GO:0005829">
    <property type="term" value="C:cytosol"/>
    <property type="evidence" value="ECO:0007669"/>
    <property type="project" value="Ensembl"/>
</dbReference>
<dbReference type="GO" id="GO:0030496">
    <property type="term" value="C:midbody"/>
    <property type="evidence" value="ECO:0007669"/>
    <property type="project" value="Ensembl"/>
</dbReference>
<dbReference type="GO" id="GO:0005758">
    <property type="term" value="C:mitochondrial intermembrane space"/>
    <property type="evidence" value="ECO:0000318"/>
    <property type="project" value="GO_Central"/>
</dbReference>
<dbReference type="GO" id="GO:0005739">
    <property type="term" value="C:mitochondrion"/>
    <property type="evidence" value="ECO:0000304"/>
    <property type="project" value="AgBase"/>
</dbReference>
<dbReference type="GO" id="GO:0005654">
    <property type="term" value="C:nucleoplasm"/>
    <property type="evidence" value="ECO:0007669"/>
    <property type="project" value="Ensembl"/>
</dbReference>
<dbReference type="GO" id="GO:0005819">
    <property type="term" value="C:spindle"/>
    <property type="evidence" value="ECO:0007669"/>
    <property type="project" value="UniProtKB-SubCell"/>
</dbReference>
<dbReference type="GO" id="GO:0003713">
    <property type="term" value="F:transcription coactivator activity"/>
    <property type="evidence" value="ECO:0000250"/>
    <property type="project" value="UniProtKB"/>
</dbReference>
<dbReference type="GO" id="GO:0051457">
    <property type="term" value="P:maintenance of protein location in nucleus"/>
    <property type="evidence" value="ECO:0000250"/>
    <property type="project" value="UniProtKB"/>
</dbReference>
<dbReference type="GO" id="GO:0042531">
    <property type="term" value="P:positive regulation of tyrosine phosphorylation of STAT protein"/>
    <property type="evidence" value="ECO:0000250"/>
    <property type="project" value="UniProtKB"/>
</dbReference>
<dbReference type="FunFam" id="1.20.1520.10:FF:000002">
    <property type="entry name" value="ADP-ribosylation factor-like protein 2-binding protein isoform X1"/>
    <property type="match status" value="1"/>
</dbReference>
<dbReference type="Gene3D" id="1.20.1520.10">
    <property type="entry name" value="ADP-ribosylation factor-like 2-binding protein, domain"/>
    <property type="match status" value="1"/>
</dbReference>
<dbReference type="InterPro" id="IPR038849">
    <property type="entry name" value="ARL2BP"/>
</dbReference>
<dbReference type="InterPro" id="IPR023379">
    <property type="entry name" value="BART_dom"/>
</dbReference>
<dbReference type="InterPro" id="IPR042541">
    <property type="entry name" value="BART_sf"/>
</dbReference>
<dbReference type="PANTHER" id="PTHR15487">
    <property type="entry name" value="ADP-RIBOSYLATION FACTOR-LIKE PROTEIN 2-BINDING PROTEIN"/>
    <property type="match status" value="1"/>
</dbReference>
<dbReference type="PANTHER" id="PTHR15487:SF4">
    <property type="entry name" value="ADP-RIBOSYLATION FACTOR-LIKE PROTEIN 2-BINDING PROTEIN"/>
    <property type="match status" value="1"/>
</dbReference>
<dbReference type="Pfam" id="PF11527">
    <property type="entry name" value="ARL2_Bind_BART"/>
    <property type="match status" value="1"/>
</dbReference>
<protein>
    <recommendedName>
        <fullName>ADP-ribosylation factor-like protein 2-binding protein</fullName>
        <shortName>ARF-like 2-binding protein</shortName>
    </recommendedName>
    <alternativeName>
        <fullName>Binder of ARF2 protein 1</fullName>
    </alternativeName>
</protein>